<reference key="1">
    <citation type="journal article" date="2006" name="Proc. Natl. Acad. Sci. U.S.A.">
        <title>The partitioned Rhizobium etli genome: genetic and metabolic redundancy in seven interacting replicons.</title>
        <authorList>
            <person name="Gonzalez V."/>
            <person name="Santamaria R.I."/>
            <person name="Bustos P."/>
            <person name="Hernandez-Gonzalez I."/>
            <person name="Medrano-Soto A."/>
            <person name="Moreno-Hagelsieb G."/>
            <person name="Janga S.C."/>
            <person name="Ramirez M.A."/>
            <person name="Jimenez-Jacinto V."/>
            <person name="Collado-Vides J."/>
            <person name="Davila G."/>
        </authorList>
    </citation>
    <scope>NUCLEOTIDE SEQUENCE [LARGE SCALE GENOMIC DNA]</scope>
    <source>
        <strain>ATCC 51251 / DSM 11541 / JCM 21823 / NBRC 15573 / CFN 42</strain>
    </source>
</reference>
<evidence type="ECO:0000255" key="1">
    <source>
        <dbReference type="HAMAP-Rule" id="MF_01343"/>
    </source>
</evidence>
<evidence type="ECO:0000305" key="2"/>
<proteinExistence type="inferred from homology"/>
<dbReference type="EMBL" id="CP000133">
    <property type="protein sequence ID" value="ABC88937.1"/>
    <property type="molecule type" value="Genomic_DNA"/>
</dbReference>
<dbReference type="RefSeq" id="WP_009997779.1">
    <property type="nucleotide sequence ID" value="NC_007761.1"/>
</dbReference>
<dbReference type="SMR" id="Q2KDZ9"/>
<dbReference type="GeneID" id="91146566"/>
<dbReference type="KEGG" id="ret:RHE_CH00112"/>
<dbReference type="eggNOG" id="COG0184">
    <property type="taxonomic scope" value="Bacteria"/>
</dbReference>
<dbReference type="HOGENOM" id="CLU_148518_0_0_5"/>
<dbReference type="OrthoDB" id="9799262at2"/>
<dbReference type="Proteomes" id="UP000001936">
    <property type="component" value="Chromosome"/>
</dbReference>
<dbReference type="GO" id="GO:0022627">
    <property type="term" value="C:cytosolic small ribosomal subunit"/>
    <property type="evidence" value="ECO:0007669"/>
    <property type="project" value="TreeGrafter"/>
</dbReference>
<dbReference type="GO" id="GO:0019843">
    <property type="term" value="F:rRNA binding"/>
    <property type="evidence" value="ECO:0007669"/>
    <property type="project" value="UniProtKB-UniRule"/>
</dbReference>
<dbReference type="GO" id="GO:0003735">
    <property type="term" value="F:structural constituent of ribosome"/>
    <property type="evidence" value="ECO:0007669"/>
    <property type="project" value="InterPro"/>
</dbReference>
<dbReference type="GO" id="GO:0006412">
    <property type="term" value="P:translation"/>
    <property type="evidence" value="ECO:0007669"/>
    <property type="project" value="UniProtKB-UniRule"/>
</dbReference>
<dbReference type="CDD" id="cd00353">
    <property type="entry name" value="Ribosomal_S15p_S13e"/>
    <property type="match status" value="1"/>
</dbReference>
<dbReference type="FunFam" id="1.10.287.10:FF:000002">
    <property type="entry name" value="30S ribosomal protein S15"/>
    <property type="match status" value="1"/>
</dbReference>
<dbReference type="Gene3D" id="6.10.250.3130">
    <property type="match status" value="1"/>
</dbReference>
<dbReference type="Gene3D" id="1.10.287.10">
    <property type="entry name" value="S15/NS1, RNA-binding"/>
    <property type="match status" value="1"/>
</dbReference>
<dbReference type="HAMAP" id="MF_01343_B">
    <property type="entry name" value="Ribosomal_uS15_B"/>
    <property type="match status" value="1"/>
</dbReference>
<dbReference type="InterPro" id="IPR000589">
    <property type="entry name" value="Ribosomal_uS15"/>
</dbReference>
<dbReference type="InterPro" id="IPR005290">
    <property type="entry name" value="Ribosomal_uS15_bac-type"/>
</dbReference>
<dbReference type="InterPro" id="IPR009068">
    <property type="entry name" value="uS15_NS1_RNA-bd_sf"/>
</dbReference>
<dbReference type="NCBIfam" id="TIGR00952">
    <property type="entry name" value="S15_bact"/>
    <property type="match status" value="1"/>
</dbReference>
<dbReference type="PANTHER" id="PTHR23321">
    <property type="entry name" value="RIBOSOMAL PROTEIN S15, BACTERIAL AND ORGANELLAR"/>
    <property type="match status" value="1"/>
</dbReference>
<dbReference type="PANTHER" id="PTHR23321:SF26">
    <property type="entry name" value="SMALL RIBOSOMAL SUBUNIT PROTEIN US15M"/>
    <property type="match status" value="1"/>
</dbReference>
<dbReference type="Pfam" id="PF00312">
    <property type="entry name" value="Ribosomal_S15"/>
    <property type="match status" value="1"/>
</dbReference>
<dbReference type="SMART" id="SM01387">
    <property type="entry name" value="Ribosomal_S15"/>
    <property type="match status" value="1"/>
</dbReference>
<dbReference type="SUPFAM" id="SSF47060">
    <property type="entry name" value="S15/NS1 RNA-binding domain"/>
    <property type="match status" value="1"/>
</dbReference>
<dbReference type="PROSITE" id="PS00362">
    <property type="entry name" value="RIBOSOMAL_S15"/>
    <property type="match status" value="1"/>
</dbReference>
<accession>Q2KDZ9</accession>
<organism>
    <name type="scientific">Rhizobium etli (strain ATCC 51251 / DSM 11541 / JCM 21823 / NBRC 15573 / CFN 42)</name>
    <dbReference type="NCBI Taxonomy" id="347834"/>
    <lineage>
        <taxon>Bacteria</taxon>
        <taxon>Pseudomonadati</taxon>
        <taxon>Pseudomonadota</taxon>
        <taxon>Alphaproteobacteria</taxon>
        <taxon>Hyphomicrobiales</taxon>
        <taxon>Rhizobiaceae</taxon>
        <taxon>Rhizobium/Agrobacterium group</taxon>
        <taxon>Rhizobium</taxon>
    </lineage>
</organism>
<feature type="chain" id="PRO_0000255518" description="Small ribosomal subunit protein uS15">
    <location>
        <begin position="1"/>
        <end position="89"/>
    </location>
</feature>
<gene>
    <name evidence="1" type="primary">rpsO</name>
    <name type="ordered locus">RHE_CH00112</name>
</gene>
<sequence length="89" mass="10172">MSITAERKAALIKEYATAEGDTGSPEVQVAILTERINNLTEHFKDHKKDNHSRRGLLTMVSSRRSLLDYLKKKDEGRYSKLINSLGIRR</sequence>
<protein>
    <recommendedName>
        <fullName evidence="1">Small ribosomal subunit protein uS15</fullName>
    </recommendedName>
    <alternativeName>
        <fullName evidence="2">30S ribosomal protein S15</fullName>
    </alternativeName>
</protein>
<comment type="function">
    <text evidence="1">One of the primary rRNA binding proteins, it binds directly to 16S rRNA where it helps nucleate assembly of the platform of the 30S subunit by binding and bridging several RNA helices of the 16S rRNA.</text>
</comment>
<comment type="function">
    <text evidence="1">Forms an intersubunit bridge (bridge B4) with the 23S rRNA of the 50S subunit in the ribosome.</text>
</comment>
<comment type="subunit">
    <text evidence="1">Part of the 30S ribosomal subunit. Forms a bridge to the 50S subunit in the 70S ribosome, contacting the 23S rRNA.</text>
</comment>
<comment type="similarity">
    <text evidence="1">Belongs to the universal ribosomal protein uS15 family.</text>
</comment>
<name>RS15_RHIEC</name>
<keyword id="KW-1185">Reference proteome</keyword>
<keyword id="KW-0687">Ribonucleoprotein</keyword>
<keyword id="KW-0689">Ribosomal protein</keyword>
<keyword id="KW-0694">RNA-binding</keyword>
<keyword id="KW-0699">rRNA-binding</keyword>